<gene>
    <name type="primary">dctA1</name>
    <name type="ordered locus">NGR_a01180</name>
    <name type="ORF">y4vF</name>
</gene>
<evidence type="ECO:0000255" key="1"/>
<evidence type="ECO:0000256" key="2">
    <source>
        <dbReference type="SAM" id="MobiDB-lite"/>
    </source>
</evidence>
<evidence type="ECO:0000305" key="3"/>
<accession>P31601</accession>
<accession>Q53214</accession>
<protein>
    <recommendedName>
        <fullName>C4-dicarboxylate transport protein</fullName>
    </recommendedName>
</protein>
<reference key="1">
    <citation type="journal article" date="1992" name="Mol. Plant Microbe Interact.">
        <title>Two C4-dicarboxylate transport systems in Rhizobium sp. NGR234: rhizobial dicarboxylate transport is essential for nitrogen fixation in tropical legume symbioses.</title>
        <authorList>
            <person name="van Slooten J.C."/>
            <person name="Bhuvanasvari T.V."/>
            <person name="Bardin S."/>
            <person name="Stanley J."/>
        </authorList>
    </citation>
    <scope>NUCLEOTIDE SEQUENCE [GENOMIC DNA]</scope>
</reference>
<reference key="2">
    <citation type="journal article" date="1996" name="Genome Res.">
        <title>Sequencing the 500-kb GC-rich symbiotic replicon of Rhizobium sp. NGR234 using dye terminators and a thermostable 'sequenase': a beginning.</title>
        <authorList>
            <person name="Freiberg C."/>
            <person name="Perret X."/>
            <person name="Broughton W.J."/>
            <person name="Rosenthal A."/>
        </authorList>
    </citation>
    <scope>NUCLEOTIDE SEQUENCE [GENOMIC DNA]</scope>
</reference>
<reference key="3">
    <citation type="journal article" date="1997" name="Nature">
        <title>Molecular basis of symbiosis between Rhizobium and legumes.</title>
        <authorList>
            <person name="Freiberg C.A."/>
            <person name="Fellay R."/>
            <person name="Bairoch A."/>
            <person name="Broughton W.J."/>
            <person name="Rosenthal A."/>
            <person name="Perret X."/>
        </authorList>
    </citation>
    <scope>NUCLEOTIDE SEQUENCE [LARGE SCALE GENOMIC DNA]</scope>
    <source>
        <strain>NBRC 101917 / NGR234</strain>
    </source>
</reference>
<reference key="4">
    <citation type="journal article" date="2009" name="Appl. Environ. Microbiol.">
        <title>Rhizobium sp. strain NGR234 possesses a remarkable number of secretion systems.</title>
        <authorList>
            <person name="Schmeisser C."/>
            <person name="Liesegang H."/>
            <person name="Krysciak D."/>
            <person name="Bakkou N."/>
            <person name="Le Quere A."/>
            <person name="Wollherr A."/>
            <person name="Heinemeyer I."/>
            <person name="Morgenstern B."/>
            <person name="Pommerening-Roeser A."/>
            <person name="Flores M."/>
            <person name="Palacios R."/>
            <person name="Brenner S."/>
            <person name="Gottschalk G."/>
            <person name="Schmitz R.A."/>
            <person name="Broughton W.J."/>
            <person name="Perret X."/>
            <person name="Strittmatter A.W."/>
            <person name="Streit W.R."/>
        </authorList>
    </citation>
    <scope>NUCLEOTIDE SEQUENCE [LARGE SCALE GENOMIC DNA]</scope>
    <source>
        <strain>NBRC 101917 / NGR234</strain>
    </source>
</reference>
<comment type="function">
    <text>Responsible for the transport of dicarboxylates such as succinate, fumarate, and malate from the periplasm across the inner membrane. This transport system plays an essential role in the energy supply of tropical rhizobium-legume symbionts.</text>
</comment>
<comment type="subcellular location">
    <subcellularLocation>
        <location>Cell inner membrane</location>
        <topology>Multi-pass membrane protein</topology>
    </subcellularLocation>
</comment>
<comment type="induction">
    <text>By succinate, fumarate, and malate. Expression depends on the RpoN sigma factor.</text>
</comment>
<comment type="similarity">
    <text evidence="3">Belongs to the dicarboxylate/amino acid:cation symporter (DAACS) (TC 2.A.23) family.</text>
</comment>
<comment type="caution">
    <text evidence="3">There are two genes for DctA in NGR234; one on the sym plasmid, the other on the chromosome.</text>
</comment>
<comment type="sequence caution" evidence="3">
    <conflict type="erroneous initiation">
        <sequence resource="EMBL-CDS" id="AAB22400"/>
    </conflict>
</comment>
<comment type="sequence caution" evidence="3">
    <conflict type="erroneous initiation">
        <sequence resource="EMBL-CDS" id="AAB91894"/>
    </conflict>
</comment>
<comment type="sequence caution" evidence="3">
    <conflict type="erroneous initiation">
        <sequence resource="EMBL-CDS" id="CAA92421"/>
    </conflict>
</comment>
<dbReference type="EMBL" id="S38912">
    <property type="protein sequence ID" value="AAB22400.1"/>
    <property type="status" value="ALT_INIT"/>
    <property type="molecule type" value="Genomic_DNA"/>
</dbReference>
<dbReference type="EMBL" id="S38912">
    <property type="protein sequence ID" value="AAB22401.1"/>
    <property type="molecule type" value="Genomic_DNA"/>
</dbReference>
<dbReference type="EMBL" id="Z68203">
    <property type="protein sequence ID" value="CAA92421.1"/>
    <property type="status" value="ALT_INIT"/>
    <property type="molecule type" value="Genomic_DNA"/>
</dbReference>
<dbReference type="EMBL" id="U00090">
    <property type="protein sequence ID" value="AAB91894.1"/>
    <property type="status" value="ALT_INIT"/>
    <property type="molecule type" value="Genomic_DNA"/>
</dbReference>
<dbReference type="RefSeq" id="NP_444107.1">
    <property type="nucleotide sequence ID" value="NC_000914.2"/>
</dbReference>
<dbReference type="RefSeq" id="WP_240545265.1">
    <property type="nucleotide sequence ID" value="NC_000914.2"/>
</dbReference>
<dbReference type="SMR" id="P31601"/>
<dbReference type="KEGG" id="rhi:NGR_a01180"/>
<dbReference type="PATRIC" id="fig|394.7.peg.102"/>
<dbReference type="eggNOG" id="COG1301">
    <property type="taxonomic scope" value="Bacteria"/>
</dbReference>
<dbReference type="HOGENOM" id="CLU_019375_7_0_5"/>
<dbReference type="OrthoDB" id="9766690at2"/>
<dbReference type="Proteomes" id="UP000001054">
    <property type="component" value="Plasmid pNGR234a"/>
</dbReference>
<dbReference type="GO" id="GO:0005886">
    <property type="term" value="C:plasma membrane"/>
    <property type="evidence" value="ECO:0007669"/>
    <property type="project" value="UniProtKB-SubCell"/>
</dbReference>
<dbReference type="GO" id="GO:0015138">
    <property type="term" value="F:fumarate transmembrane transporter activity"/>
    <property type="evidence" value="ECO:0007669"/>
    <property type="project" value="TreeGrafter"/>
</dbReference>
<dbReference type="GO" id="GO:0015366">
    <property type="term" value="F:malate:proton symporter activity"/>
    <property type="evidence" value="ECO:0007669"/>
    <property type="project" value="TreeGrafter"/>
</dbReference>
<dbReference type="GO" id="GO:0015141">
    <property type="term" value="F:succinate transmembrane transporter activity"/>
    <property type="evidence" value="ECO:0007669"/>
    <property type="project" value="TreeGrafter"/>
</dbReference>
<dbReference type="GO" id="GO:0070778">
    <property type="term" value="P:L-aspartate transmembrane transport"/>
    <property type="evidence" value="ECO:0007669"/>
    <property type="project" value="TreeGrafter"/>
</dbReference>
<dbReference type="FunFam" id="1.10.3860.10:FF:000001">
    <property type="entry name" value="C4-dicarboxylate transport protein"/>
    <property type="match status" value="1"/>
</dbReference>
<dbReference type="Gene3D" id="1.10.3860.10">
    <property type="entry name" value="Sodium:dicarboxylate symporter"/>
    <property type="match status" value="1"/>
</dbReference>
<dbReference type="HAMAP" id="MF_01300">
    <property type="entry name" value="C4_dicarb_transport"/>
    <property type="match status" value="1"/>
</dbReference>
<dbReference type="InterPro" id="IPR023954">
    <property type="entry name" value="C4_dicarb_transport"/>
</dbReference>
<dbReference type="InterPro" id="IPR001991">
    <property type="entry name" value="Na-dicarboxylate_symporter"/>
</dbReference>
<dbReference type="InterPro" id="IPR018107">
    <property type="entry name" value="Na-dicarboxylate_symporter_CS"/>
</dbReference>
<dbReference type="InterPro" id="IPR036458">
    <property type="entry name" value="Na:dicarbo_symporter_sf"/>
</dbReference>
<dbReference type="NCBIfam" id="NF002461">
    <property type="entry name" value="PRK01663.1"/>
    <property type="match status" value="1"/>
</dbReference>
<dbReference type="NCBIfam" id="NF009587">
    <property type="entry name" value="PRK13027.1"/>
    <property type="match status" value="1"/>
</dbReference>
<dbReference type="PANTHER" id="PTHR42865:SF1">
    <property type="entry name" value="AEROBIC C4-DICARBOXYLATE TRANSPORT PROTEIN"/>
    <property type="match status" value="1"/>
</dbReference>
<dbReference type="PANTHER" id="PTHR42865">
    <property type="entry name" value="PROTON/GLUTAMATE-ASPARTATE SYMPORTER"/>
    <property type="match status" value="1"/>
</dbReference>
<dbReference type="Pfam" id="PF00375">
    <property type="entry name" value="SDF"/>
    <property type="match status" value="1"/>
</dbReference>
<dbReference type="PRINTS" id="PR00173">
    <property type="entry name" value="EDTRNSPORT"/>
</dbReference>
<dbReference type="SUPFAM" id="SSF118215">
    <property type="entry name" value="Proton glutamate symport protein"/>
    <property type="match status" value="1"/>
</dbReference>
<dbReference type="PROSITE" id="PS00713">
    <property type="entry name" value="NA_DICARBOXYL_SYMP_1"/>
    <property type="match status" value="1"/>
</dbReference>
<dbReference type="PROSITE" id="PS00714">
    <property type="entry name" value="NA_DICARBOXYL_SYMP_2"/>
    <property type="match status" value="1"/>
</dbReference>
<organism>
    <name type="scientific">Sinorhizobium fredii (strain NBRC 101917 / NGR234)</name>
    <dbReference type="NCBI Taxonomy" id="394"/>
    <lineage>
        <taxon>Bacteria</taxon>
        <taxon>Pseudomonadati</taxon>
        <taxon>Pseudomonadota</taxon>
        <taxon>Alphaproteobacteria</taxon>
        <taxon>Hyphomicrobiales</taxon>
        <taxon>Rhizobiaceae</taxon>
        <taxon>Sinorhizobium/Ensifer group</taxon>
        <taxon>Sinorhizobium</taxon>
    </lineage>
</organism>
<sequence>MHQVEEIILIVENLAEVRGKTPHYRHLYVQVLAAIAVGILLGYFYPDVGSKMKPLGDAFIMLVKMIIAPVIFLTVATGIAGMTDLAKVGRVAGKAMIYFLTFSTLALLVGLVVANVVQPGAGMHIDPASLDAKAIATYAEKAHEQSVTGFLMNIIPTTLVGAFAEGDILQVLFISVLFGISLAIVGKKAEAVVDFLHALTLPIFRLVAILMKAAPIGAFGAMAFTIGKYGVASIANLAMLIGTFYLTSFLFVFMVLGAVARYNGFSIVALIRYIKEELLLVLGTSSSEAALPGLMNKMEKAGCKRSVVGLVIPTGYSFNLDGTNIYMTLAALFIAQATDTPISYGDQILLLLIAMLSSKGAAGITGAGFITLAATLSAVPSVPVAGMALILGIDRFMSECRAITNIIGNAVATIVVAKWEGELAPAQLATTLAGKAPVETMSGLSSQRSDTVELGQKVLFGATNSADRTLAGRPGGRDSRRIAPDHSAQVFGGPLSL</sequence>
<name>DCTA_SINFN</name>
<geneLocation type="plasmid">
    <name>sym pNGR234a</name>
</geneLocation>
<proteinExistence type="evidence at transcript level"/>
<keyword id="KW-0997">Cell inner membrane</keyword>
<keyword id="KW-1003">Cell membrane</keyword>
<keyword id="KW-0472">Membrane</keyword>
<keyword id="KW-0614">Plasmid</keyword>
<keyword id="KW-1185">Reference proteome</keyword>
<keyword id="KW-0769">Symport</keyword>
<keyword id="KW-0812">Transmembrane</keyword>
<keyword id="KW-1133">Transmembrane helix</keyword>
<keyword id="KW-0813">Transport</keyword>
<feature type="chain" id="PRO_0000202110" description="C4-dicarboxylate transport protein">
    <location>
        <begin position="1"/>
        <end position="497"/>
    </location>
</feature>
<feature type="transmembrane region" description="Helical" evidence="1">
    <location>
        <begin position="27"/>
        <end position="45"/>
    </location>
</feature>
<feature type="transmembrane region" description="Helical" evidence="1">
    <location>
        <begin position="60"/>
        <end position="82"/>
    </location>
</feature>
<feature type="transmembrane region" description="Helical" evidence="1">
    <location>
        <begin position="95"/>
        <end position="117"/>
    </location>
</feature>
<feature type="transmembrane region" description="Helical" evidence="1">
    <location>
        <begin position="168"/>
        <end position="185"/>
    </location>
</feature>
<feature type="transmembrane region" description="Helical" evidence="1">
    <location>
        <begin position="205"/>
        <end position="227"/>
    </location>
</feature>
<feature type="transmembrane region" description="Helical" evidence="1">
    <location>
        <begin position="237"/>
        <end position="259"/>
    </location>
</feature>
<feature type="transmembrane region" description="Helical" evidence="1">
    <location>
        <begin position="348"/>
        <end position="370"/>
    </location>
</feature>
<feature type="transmembrane region" description="Helical" evidence="1">
    <location>
        <begin position="374"/>
        <end position="393"/>
    </location>
</feature>
<feature type="region of interest" description="Disordered" evidence="2">
    <location>
        <begin position="466"/>
        <end position="497"/>
    </location>
</feature>
<feature type="compositionally biased region" description="Basic and acidic residues" evidence="2">
    <location>
        <begin position="475"/>
        <end position="484"/>
    </location>
</feature>
<feature type="sequence conflict" description="In Ref. 1; AAB22400/AAB22401." evidence="3" ref="1">
    <original>T</original>
    <variation>A</variation>
    <location>
        <position position="101"/>
    </location>
</feature>
<feature type="sequence conflict" description="In Ref. 1; AAB22400/AAB22401." evidence="3" ref="1">
    <original>A</original>
    <variation>G</variation>
    <location>
        <position position="337"/>
    </location>
</feature>
<feature type="sequence conflict" description="In Ref. 1." evidence="3" ref="1">
    <original>PVETMSGLSSQRSDTVELGQKVLFGATNSADRTLAGRPGGRDSRRIAPDHSAQVFGGPLSL</original>
    <variation>AGGDHVGVVKPAE</variation>
    <location>
        <begin position="437"/>
        <end position="497"/>
    </location>
</feature>